<accession>A6NNA5</accession>
<keyword id="KW-0217">Developmental protein</keyword>
<keyword id="KW-0238">DNA-binding</keyword>
<keyword id="KW-0371">Homeobox</keyword>
<keyword id="KW-0539">Nucleus</keyword>
<keyword id="KW-1267">Proteomics identification</keyword>
<keyword id="KW-1185">Reference proteome</keyword>
<keyword id="KW-0804">Transcription</keyword>
<keyword id="KW-0805">Transcription regulation</keyword>
<organism>
    <name type="scientific">Homo sapiens</name>
    <name type="common">Human</name>
    <dbReference type="NCBI Taxonomy" id="9606"/>
    <lineage>
        <taxon>Eukaryota</taxon>
        <taxon>Metazoa</taxon>
        <taxon>Chordata</taxon>
        <taxon>Craniata</taxon>
        <taxon>Vertebrata</taxon>
        <taxon>Euteleostomi</taxon>
        <taxon>Mammalia</taxon>
        <taxon>Eutheria</taxon>
        <taxon>Euarchontoglires</taxon>
        <taxon>Primates</taxon>
        <taxon>Haplorrhini</taxon>
        <taxon>Catarrhini</taxon>
        <taxon>Hominidae</taxon>
        <taxon>Homo</taxon>
    </lineage>
</organism>
<protein>
    <recommendedName>
        <fullName>Dorsal root ganglia homeobox protein</fullName>
    </recommendedName>
    <alternativeName>
        <fullName>Paired-related homeobox protein-like 1</fullName>
    </alternativeName>
</protein>
<feature type="chain" id="PRO_0000300814" description="Dorsal root ganglia homeobox protein">
    <location>
        <begin position="1"/>
        <end position="263"/>
    </location>
</feature>
<feature type="DNA-binding region" description="Homeobox" evidence="2">
    <location>
        <begin position="33"/>
        <end position="92"/>
    </location>
</feature>
<feature type="region of interest" description="Disordered" evidence="4">
    <location>
        <begin position="88"/>
        <end position="138"/>
    </location>
</feature>
<feature type="region of interest" description="Disordered" evidence="4">
    <location>
        <begin position="220"/>
        <end position="263"/>
    </location>
</feature>
<feature type="short sequence motif" description="OAR" evidence="3">
    <location>
        <begin position="204"/>
        <end position="217"/>
    </location>
</feature>
<feature type="compositionally biased region" description="Basic and acidic residues" evidence="4">
    <location>
        <begin position="89"/>
        <end position="106"/>
    </location>
</feature>
<feature type="compositionally biased region" description="Pro residues" evidence="4">
    <location>
        <begin position="110"/>
        <end position="123"/>
    </location>
</feature>
<feature type="compositionally biased region" description="Polar residues" evidence="4">
    <location>
        <begin position="220"/>
        <end position="234"/>
    </location>
</feature>
<feature type="compositionally biased region" description="Basic and acidic residues" evidence="4">
    <location>
        <begin position="251"/>
        <end position="263"/>
    </location>
</feature>
<dbReference type="EMBL" id="AC027674">
    <property type="status" value="NOT_ANNOTATED_CDS"/>
    <property type="molecule type" value="Genomic_DNA"/>
</dbReference>
<dbReference type="EMBL" id="CH471187">
    <property type="protein sequence ID" value="EAW93100.1"/>
    <property type="molecule type" value="Genomic_DNA"/>
</dbReference>
<dbReference type="CCDS" id="CCDS44388.2"/>
<dbReference type="RefSeq" id="NP_001263380.1">
    <property type="nucleotide sequence ID" value="NM_001276451.2"/>
</dbReference>
<dbReference type="SMR" id="A6NNA5"/>
<dbReference type="FunCoup" id="A6NNA5">
    <property type="interactions" value="248"/>
</dbReference>
<dbReference type="STRING" id="9606.ENSP00000363254"/>
<dbReference type="GlyGen" id="A6NNA5">
    <property type="glycosylation" value="1 site, 1 O-linked glycan (1 site)"/>
</dbReference>
<dbReference type="iPTMnet" id="A6NNA5"/>
<dbReference type="PhosphoSitePlus" id="A6NNA5"/>
<dbReference type="BioMuta" id="DRGX"/>
<dbReference type="jPOST" id="A6NNA5"/>
<dbReference type="MassIVE" id="A6NNA5"/>
<dbReference type="PaxDb" id="9606-ENSP00000363254"/>
<dbReference type="PeptideAtlas" id="A6NNA5"/>
<dbReference type="ProteomicsDB" id="1595"/>
<dbReference type="Antibodypedia" id="27592">
    <property type="antibodies" value="159 antibodies from 22 providers"/>
</dbReference>
<dbReference type="DNASU" id="644168"/>
<dbReference type="Ensembl" id="ENST00000374139.8">
    <property type="protein sequence ID" value="ENSP00000363254.1"/>
    <property type="gene ID" value="ENSG00000165606.10"/>
</dbReference>
<dbReference type="GeneID" id="644168"/>
<dbReference type="KEGG" id="hsa:644168"/>
<dbReference type="MANE-Select" id="ENST00000374139.8">
    <property type="protein sequence ID" value="ENSP00000363254.1"/>
    <property type="RefSeq nucleotide sequence ID" value="NM_001276451.2"/>
    <property type="RefSeq protein sequence ID" value="NP_001263380.1"/>
</dbReference>
<dbReference type="UCSC" id="uc021pqd.2">
    <property type="organism name" value="human"/>
</dbReference>
<dbReference type="AGR" id="HGNC:21536"/>
<dbReference type="CTD" id="644168"/>
<dbReference type="DisGeNET" id="644168"/>
<dbReference type="GeneCards" id="DRGX"/>
<dbReference type="HGNC" id="HGNC:21536">
    <property type="gene designation" value="DRGX"/>
</dbReference>
<dbReference type="HPA" id="ENSG00000165606">
    <property type="expression patterns" value="Group enriched (adrenal gland, brain)"/>
</dbReference>
<dbReference type="MIM" id="606701">
    <property type="type" value="gene"/>
</dbReference>
<dbReference type="neXtProt" id="NX_A6NNA5"/>
<dbReference type="OpenTargets" id="ENSG00000165606"/>
<dbReference type="VEuPathDB" id="HostDB:ENSG00000165606"/>
<dbReference type="eggNOG" id="KOG0490">
    <property type="taxonomic scope" value="Eukaryota"/>
</dbReference>
<dbReference type="GeneTree" id="ENSGT00940000159008"/>
<dbReference type="HOGENOM" id="CLU_079091_0_0_1"/>
<dbReference type="InParanoid" id="A6NNA5"/>
<dbReference type="OMA" id="NHAPTDF"/>
<dbReference type="OrthoDB" id="6159439at2759"/>
<dbReference type="PAN-GO" id="A6NNA5">
    <property type="GO annotations" value="3 GO annotations based on evolutionary models"/>
</dbReference>
<dbReference type="PhylomeDB" id="A6NNA5"/>
<dbReference type="PathwayCommons" id="A6NNA5"/>
<dbReference type="SignaLink" id="A6NNA5"/>
<dbReference type="BioGRID-ORCS" id="644168">
    <property type="hits" value="18 hits in 1167 CRISPR screens"/>
</dbReference>
<dbReference type="GenomeRNAi" id="644168"/>
<dbReference type="Pharos" id="A6NNA5">
    <property type="development level" value="Tbio"/>
</dbReference>
<dbReference type="PRO" id="PR:A6NNA5"/>
<dbReference type="Proteomes" id="UP000005640">
    <property type="component" value="Chromosome 10"/>
</dbReference>
<dbReference type="RNAct" id="A6NNA5">
    <property type="molecule type" value="protein"/>
</dbReference>
<dbReference type="Bgee" id="ENSG00000165606">
    <property type="expression patterns" value="Expressed in male germ line stem cell (sensu Vertebrata) in testis and 32 other cell types or tissues"/>
</dbReference>
<dbReference type="GO" id="GO:0000785">
    <property type="term" value="C:chromatin"/>
    <property type="evidence" value="ECO:0000247"/>
    <property type="project" value="NTNU_SB"/>
</dbReference>
<dbReference type="GO" id="GO:0005634">
    <property type="term" value="C:nucleus"/>
    <property type="evidence" value="ECO:0007669"/>
    <property type="project" value="UniProtKB-SubCell"/>
</dbReference>
<dbReference type="GO" id="GO:0000981">
    <property type="term" value="F:DNA-binding transcription factor activity, RNA polymerase II-specific"/>
    <property type="evidence" value="ECO:0000247"/>
    <property type="project" value="NTNU_SB"/>
</dbReference>
<dbReference type="GO" id="GO:0000977">
    <property type="term" value="F:RNA polymerase II transcription regulatory region sequence-specific DNA binding"/>
    <property type="evidence" value="ECO:0000318"/>
    <property type="project" value="GO_Central"/>
</dbReference>
<dbReference type="GO" id="GO:1990837">
    <property type="term" value="F:sequence-specific double-stranded DNA binding"/>
    <property type="evidence" value="ECO:0000314"/>
    <property type="project" value="ARUK-UCL"/>
</dbReference>
<dbReference type="GO" id="GO:0007411">
    <property type="term" value="P:axon guidance"/>
    <property type="evidence" value="ECO:0007669"/>
    <property type="project" value="Ensembl"/>
</dbReference>
<dbReference type="GO" id="GO:0009593">
    <property type="term" value="P:detection of chemical stimulus"/>
    <property type="evidence" value="ECO:0007669"/>
    <property type="project" value="Ensembl"/>
</dbReference>
<dbReference type="GO" id="GO:0016048">
    <property type="term" value="P:detection of temperature stimulus"/>
    <property type="evidence" value="ECO:0007669"/>
    <property type="project" value="Ensembl"/>
</dbReference>
<dbReference type="GO" id="GO:0021516">
    <property type="term" value="P:dorsal spinal cord development"/>
    <property type="evidence" value="ECO:0007669"/>
    <property type="project" value="Ensembl"/>
</dbReference>
<dbReference type="GO" id="GO:0001764">
    <property type="term" value="P:neuron migration"/>
    <property type="evidence" value="ECO:0007669"/>
    <property type="project" value="Ensembl"/>
</dbReference>
<dbReference type="GO" id="GO:0006357">
    <property type="term" value="P:regulation of transcription by RNA polymerase II"/>
    <property type="evidence" value="ECO:0000318"/>
    <property type="project" value="GO_Central"/>
</dbReference>
<dbReference type="GO" id="GO:0050954">
    <property type="term" value="P:sensory perception of mechanical stimulus"/>
    <property type="evidence" value="ECO:0007669"/>
    <property type="project" value="Ensembl"/>
</dbReference>
<dbReference type="GO" id="GO:0021559">
    <property type="term" value="P:trigeminal nerve development"/>
    <property type="evidence" value="ECO:0007669"/>
    <property type="project" value="Ensembl"/>
</dbReference>
<dbReference type="CDD" id="cd00086">
    <property type="entry name" value="homeodomain"/>
    <property type="match status" value="1"/>
</dbReference>
<dbReference type="FunFam" id="1.10.10.60:FF:000126">
    <property type="entry name" value="dorsal root ganglia homeobox protein-like"/>
    <property type="match status" value="1"/>
</dbReference>
<dbReference type="Gene3D" id="1.10.10.60">
    <property type="entry name" value="Homeodomain-like"/>
    <property type="match status" value="1"/>
</dbReference>
<dbReference type="InterPro" id="IPR001356">
    <property type="entry name" value="HD"/>
</dbReference>
<dbReference type="InterPro" id="IPR017970">
    <property type="entry name" value="Homeobox_CS"/>
</dbReference>
<dbReference type="InterPro" id="IPR009057">
    <property type="entry name" value="Homeodomain-like_sf"/>
</dbReference>
<dbReference type="InterPro" id="IPR003654">
    <property type="entry name" value="OAR_dom"/>
</dbReference>
<dbReference type="InterPro" id="IPR050649">
    <property type="entry name" value="Paired_Homeobox_TFs"/>
</dbReference>
<dbReference type="PANTHER" id="PTHR24329:SF542">
    <property type="entry name" value="DORSAL ROOT GANGLIA HOMEOBOX PROTEIN"/>
    <property type="match status" value="1"/>
</dbReference>
<dbReference type="PANTHER" id="PTHR24329">
    <property type="entry name" value="HOMEOBOX PROTEIN ARISTALESS"/>
    <property type="match status" value="1"/>
</dbReference>
<dbReference type="Pfam" id="PF00046">
    <property type="entry name" value="Homeodomain"/>
    <property type="match status" value="1"/>
</dbReference>
<dbReference type="Pfam" id="PF03826">
    <property type="entry name" value="OAR"/>
    <property type="match status" value="1"/>
</dbReference>
<dbReference type="SMART" id="SM00389">
    <property type="entry name" value="HOX"/>
    <property type="match status" value="1"/>
</dbReference>
<dbReference type="SUPFAM" id="SSF46689">
    <property type="entry name" value="Homeodomain-like"/>
    <property type="match status" value="1"/>
</dbReference>
<dbReference type="PROSITE" id="PS00027">
    <property type="entry name" value="HOMEOBOX_1"/>
    <property type="match status" value="1"/>
</dbReference>
<dbReference type="PROSITE" id="PS50071">
    <property type="entry name" value="HOMEOBOX_2"/>
    <property type="match status" value="1"/>
</dbReference>
<dbReference type="PROSITE" id="PS50803">
    <property type="entry name" value="OAR"/>
    <property type="match status" value="1"/>
</dbReference>
<name>DRGX_HUMAN</name>
<evidence type="ECO:0000250" key="1"/>
<evidence type="ECO:0000255" key="2">
    <source>
        <dbReference type="PROSITE-ProRule" id="PRU00108"/>
    </source>
</evidence>
<evidence type="ECO:0000255" key="3">
    <source>
        <dbReference type="PROSITE-ProRule" id="PRU00138"/>
    </source>
</evidence>
<evidence type="ECO:0000256" key="4">
    <source>
        <dbReference type="SAM" id="MobiDB-lite"/>
    </source>
</evidence>
<evidence type="ECO:0000305" key="5"/>
<gene>
    <name type="primary">DRGX</name>
    <name type="synonym">PRRXL1</name>
</gene>
<reference key="1">
    <citation type="journal article" date="2004" name="Nature">
        <title>The DNA sequence and comparative analysis of human chromosome 10.</title>
        <authorList>
            <person name="Deloukas P."/>
            <person name="Earthrowl M.E."/>
            <person name="Grafham D.V."/>
            <person name="Rubenfield M."/>
            <person name="French L."/>
            <person name="Steward C.A."/>
            <person name="Sims S.K."/>
            <person name="Jones M.C."/>
            <person name="Searle S."/>
            <person name="Scott C."/>
            <person name="Howe K."/>
            <person name="Hunt S.E."/>
            <person name="Andrews T.D."/>
            <person name="Gilbert J.G.R."/>
            <person name="Swarbreck D."/>
            <person name="Ashurst J.L."/>
            <person name="Taylor A."/>
            <person name="Battles J."/>
            <person name="Bird C.P."/>
            <person name="Ainscough R."/>
            <person name="Almeida J.P."/>
            <person name="Ashwell R.I.S."/>
            <person name="Ambrose K.D."/>
            <person name="Babbage A.K."/>
            <person name="Bagguley C.L."/>
            <person name="Bailey J."/>
            <person name="Banerjee R."/>
            <person name="Bates K."/>
            <person name="Beasley H."/>
            <person name="Bray-Allen S."/>
            <person name="Brown A.J."/>
            <person name="Brown J.Y."/>
            <person name="Burford D.C."/>
            <person name="Burrill W."/>
            <person name="Burton J."/>
            <person name="Cahill P."/>
            <person name="Camire D."/>
            <person name="Carter N.P."/>
            <person name="Chapman J.C."/>
            <person name="Clark S.Y."/>
            <person name="Clarke G."/>
            <person name="Clee C.M."/>
            <person name="Clegg S."/>
            <person name="Corby N."/>
            <person name="Coulson A."/>
            <person name="Dhami P."/>
            <person name="Dutta I."/>
            <person name="Dunn M."/>
            <person name="Faulkner L."/>
            <person name="Frankish A."/>
            <person name="Frankland J.A."/>
            <person name="Garner P."/>
            <person name="Garnett J."/>
            <person name="Gribble S."/>
            <person name="Griffiths C."/>
            <person name="Grocock R."/>
            <person name="Gustafson E."/>
            <person name="Hammond S."/>
            <person name="Harley J.L."/>
            <person name="Hart E."/>
            <person name="Heath P.D."/>
            <person name="Ho T.P."/>
            <person name="Hopkins B."/>
            <person name="Horne J."/>
            <person name="Howden P.J."/>
            <person name="Huckle E."/>
            <person name="Hynds C."/>
            <person name="Johnson C."/>
            <person name="Johnson D."/>
            <person name="Kana A."/>
            <person name="Kay M."/>
            <person name="Kimberley A.M."/>
            <person name="Kershaw J.K."/>
            <person name="Kokkinaki M."/>
            <person name="Laird G.K."/>
            <person name="Lawlor S."/>
            <person name="Lee H.M."/>
            <person name="Leongamornlert D.A."/>
            <person name="Laird G."/>
            <person name="Lloyd C."/>
            <person name="Lloyd D.M."/>
            <person name="Loveland J."/>
            <person name="Lovell J."/>
            <person name="McLaren S."/>
            <person name="McLay K.E."/>
            <person name="McMurray A."/>
            <person name="Mashreghi-Mohammadi M."/>
            <person name="Matthews L."/>
            <person name="Milne S."/>
            <person name="Nickerson T."/>
            <person name="Nguyen M."/>
            <person name="Overton-Larty E."/>
            <person name="Palmer S.A."/>
            <person name="Pearce A.V."/>
            <person name="Peck A.I."/>
            <person name="Pelan S."/>
            <person name="Phillimore B."/>
            <person name="Porter K."/>
            <person name="Rice C.M."/>
            <person name="Rogosin A."/>
            <person name="Ross M.T."/>
            <person name="Sarafidou T."/>
            <person name="Sehra H.K."/>
            <person name="Shownkeen R."/>
            <person name="Skuce C.D."/>
            <person name="Smith M."/>
            <person name="Standring L."/>
            <person name="Sycamore N."/>
            <person name="Tester J."/>
            <person name="Thorpe A."/>
            <person name="Torcasso W."/>
            <person name="Tracey A."/>
            <person name="Tromans A."/>
            <person name="Tsolas J."/>
            <person name="Wall M."/>
            <person name="Walsh J."/>
            <person name="Wang H."/>
            <person name="Weinstock K."/>
            <person name="West A.P."/>
            <person name="Willey D.L."/>
            <person name="Whitehead S.L."/>
            <person name="Wilming L."/>
            <person name="Wray P.W."/>
            <person name="Young L."/>
            <person name="Chen Y."/>
            <person name="Lovering R.C."/>
            <person name="Moschonas N.K."/>
            <person name="Siebert R."/>
            <person name="Fechtel K."/>
            <person name="Bentley D."/>
            <person name="Durbin R.M."/>
            <person name="Hubbard T."/>
            <person name="Doucette-Stamm L."/>
            <person name="Beck S."/>
            <person name="Smith D.R."/>
            <person name="Rogers J."/>
        </authorList>
    </citation>
    <scope>NUCLEOTIDE SEQUENCE [LARGE SCALE GENOMIC DNA]</scope>
</reference>
<reference key="2">
    <citation type="submission" date="2005-09" db="EMBL/GenBank/DDBJ databases">
        <authorList>
            <person name="Mural R.J."/>
            <person name="Istrail S."/>
            <person name="Sutton G.G."/>
            <person name="Florea L."/>
            <person name="Halpern A.L."/>
            <person name="Mobarry C.M."/>
            <person name="Lippert R."/>
            <person name="Walenz B."/>
            <person name="Shatkay H."/>
            <person name="Dew I."/>
            <person name="Miller J.R."/>
            <person name="Flanigan M.J."/>
            <person name="Edwards N.J."/>
            <person name="Bolanos R."/>
            <person name="Fasulo D."/>
            <person name="Halldorsson B.V."/>
            <person name="Hannenhalli S."/>
            <person name="Turner R."/>
            <person name="Yooseph S."/>
            <person name="Lu F."/>
            <person name="Nusskern D.R."/>
            <person name="Shue B.C."/>
            <person name="Zheng X.H."/>
            <person name="Zhong F."/>
            <person name="Delcher A.L."/>
            <person name="Huson D.H."/>
            <person name="Kravitz S.A."/>
            <person name="Mouchard L."/>
            <person name="Reinert K."/>
            <person name="Remington K.A."/>
            <person name="Clark A.G."/>
            <person name="Waterman M.S."/>
            <person name="Eichler E.E."/>
            <person name="Adams M.D."/>
            <person name="Hunkapiller M.W."/>
            <person name="Myers E.W."/>
            <person name="Venter J.C."/>
        </authorList>
    </citation>
    <scope>NUCLEOTIDE SEQUENCE [LARGE SCALE GENOMIC DNA]</scope>
</reference>
<sequence length="263" mass="28672">MFYFHCPPQLEGTATFGNHSSGDFDDGFLRRKQRRNRTTFTLQQLEALEAVFAQTHYPDVFTREELAMKINLTEARVQVWFQNRRAKWRKTERGASDQEPGAKEPMAEVTPPPVRNINSPPPGDQARSKKEALEAQQSLGRTVGPAGPFFPSCLPGTLLNTATYAQALSHVASLKGGPLCSCCVPDPMGLSFLPTYGCQSNRTASVATLRMKAREHSEAVLQSANLLPSTSSSPGPVAKPAPPDGSQEKTSPTKEQSEAEKSV</sequence>
<proteinExistence type="evidence at protein level"/>
<comment type="function">
    <text evidence="1">Transcription factor required for the formation of correct projections from nociceptive sensory neurons to the dorsal horn of the spinal cord and normal perception of pain.</text>
</comment>
<comment type="subunit">
    <text evidence="1">Interacts with RGMB.</text>
</comment>
<comment type="subcellular location">
    <subcellularLocation>
        <location evidence="2 3">Nucleus</location>
    </subcellularLocation>
</comment>
<comment type="similarity">
    <text evidence="5">Belongs to the paired homeobox family.</text>
</comment>